<proteinExistence type="evidence at protein level"/>
<organism>
    <name type="scientific">Homo sapiens</name>
    <name type="common">Human</name>
    <dbReference type="NCBI Taxonomy" id="9606"/>
    <lineage>
        <taxon>Eukaryota</taxon>
        <taxon>Metazoa</taxon>
        <taxon>Chordata</taxon>
        <taxon>Craniata</taxon>
        <taxon>Vertebrata</taxon>
        <taxon>Euteleostomi</taxon>
        <taxon>Mammalia</taxon>
        <taxon>Eutheria</taxon>
        <taxon>Euarchontoglires</taxon>
        <taxon>Primates</taxon>
        <taxon>Haplorrhini</taxon>
        <taxon>Catarrhini</taxon>
        <taxon>Hominidae</taxon>
        <taxon>Homo</taxon>
    </lineage>
</organism>
<evidence type="ECO:0000250" key="1"/>
<evidence type="ECO:0000255" key="2">
    <source>
        <dbReference type="PROSITE-ProRule" id="PRU00448"/>
    </source>
</evidence>
<accession>Q9BUA6</accession>
<name>MYL10_HUMAN</name>
<dbReference type="EMBL" id="CH471197">
    <property type="protein sequence ID" value="EAW50226.1"/>
    <property type="molecule type" value="Genomic_DNA"/>
</dbReference>
<dbReference type="EMBL" id="BC002778">
    <property type="protein sequence ID" value="AAH02778.2"/>
    <property type="molecule type" value="mRNA"/>
</dbReference>
<dbReference type="CCDS" id="CCDS34713.1"/>
<dbReference type="RefSeq" id="NP_612412.2">
    <property type="nucleotide sequence ID" value="NM_138403.4"/>
</dbReference>
<dbReference type="SMR" id="Q9BUA6"/>
<dbReference type="BioGRID" id="125022">
    <property type="interactions" value="33"/>
</dbReference>
<dbReference type="FunCoup" id="Q9BUA6">
    <property type="interactions" value="340"/>
</dbReference>
<dbReference type="IntAct" id="Q9BUA6">
    <property type="interactions" value="25"/>
</dbReference>
<dbReference type="STRING" id="9606.ENSP00000223167"/>
<dbReference type="iPTMnet" id="Q9BUA6"/>
<dbReference type="PhosphoSitePlus" id="Q9BUA6"/>
<dbReference type="BioMuta" id="MYL10"/>
<dbReference type="DMDM" id="74761268"/>
<dbReference type="jPOST" id="Q9BUA6"/>
<dbReference type="MassIVE" id="Q9BUA6"/>
<dbReference type="PaxDb" id="9606-ENSP00000223167"/>
<dbReference type="PeptideAtlas" id="Q9BUA6"/>
<dbReference type="ProteomicsDB" id="79068"/>
<dbReference type="Antibodypedia" id="16757">
    <property type="antibodies" value="31 antibodies from 12 providers"/>
</dbReference>
<dbReference type="DNASU" id="93408"/>
<dbReference type="Ensembl" id="ENST00000223167.5">
    <property type="protein sequence ID" value="ENSP00000223167.4"/>
    <property type="gene ID" value="ENSG00000106436.8"/>
</dbReference>
<dbReference type="GeneID" id="93408"/>
<dbReference type="KEGG" id="hsa:93408"/>
<dbReference type="MANE-Select" id="ENST00000223167.5">
    <property type="protein sequence ID" value="ENSP00000223167.4"/>
    <property type="RefSeq nucleotide sequence ID" value="NM_138403.5"/>
    <property type="RefSeq protein sequence ID" value="NP_612412.2"/>
</dbReference>
<dbReference type="UCSC" id="uc003uyr.3">
    <property type="organism name" value="human"/>
</dbReference>
<dbReference type="AGR" id="HGNC:29825"/>
<dbReference type="CTD" id="93408"/>
<dbReference type="DisGeNET" id="93408"/>
<dbReference type="GeneCards" id="MYL10"/>
<dbReference type="HGNC" id="HGNC:29825">
    <property type="gene designation" value="MYL10"/>
</dbReference>
<dbReference type="HPA" id="ENSG00000106436">
    <property type="expression patterns" value="Not detected"/>
</dbReference>
<dbReference type="neXtProt" id="NX_Q9BUA6"/>
<dbReference type="OpenTargets" id="ENSG00000106436"/>
<dbReference type="PharmGKB" id="PA164723254"/>
<dbReference type="VEuPathDB" id="HostDB:ENSG00000106436"/>
<dbReference type="eggNOG" id="KOG0031">
    <property type="taxonomic scope" value="Eukaryota"/>
</dbReference>
<dbReference type="GeneTree" id="ENSGT00940000161811"/>
<dbReference type="HOGENOM" id="CLU_061288_9_0_1"/>
<dbReference type="InParanoid" id="Q9BUA6"/>
<dbReference type="OMA" id="MKEMLMT"/>
<dbReference type="OrthoDB" id="429467at2759"/>
<dbReference type="PAN-GO" id="Q9BUA6">
    <property type="GO annotations" value="3 GO annotations based on evolutionary models"/>
</dbReference>
<dbReference type="PhylomeDB" id="Q9BUA6"/>
<dbReference type="TreeFam" id="TF314218"/>
<dbReference type="PathwayCommons" id="Q9BUA6"/>
<dbReference type="Reactome" id="R-HSA-445355">
    <property type="pathway name" value="Smooth Muscle Contraction"/>
</dbReference>
<dbReference type="SignaLink" id="Q9BUA6"/>
<dbReference type="BioGRID-ORCS" id="93408">
    <property type="hits" value="8 hits in 1147 CRISPR screens"/>
</dbReference>
<dbReference type="GenomeRNAi" id="93408"/>
<dbReference type="Pharos" id="Q9BUA6">
    <property type="development level" value="Tdark"/>
</dbReference>
<dbReference type="PRO" id="PR:Q9BUA6"/>
<dbReference type="Proteomes" id="UP000005640">
    <property type="component" value="Chromosome 7"/>
</dbReference>
<dbReference type="RNAct" id="Q9BUA6">
    <property type="molecule type" value="protein"/>
</dbReference>
<dbReference type="Bgee" id="ENSG00000106436">
    <property type="expression patterns" value="Expressed in olfactory bulb and 155 other cell types or tissues"/>
</dbReference>
<dbReference type="ExpressionAtlas" id="Q9BUA6">
    <property type="expression patterns" value="baseline and differential"/>
</dbReference>
<dbReference type="GO" id="GO:0005737">
    <property type="term" value="C:cytoplasm"/>
    <property type="evidence" value="ECO:0000318"/>
    <property type="project" value="GO_Central"/>
</dbReference>
<dbReference type="GO" id="GO:0005829">
    <property type="term" value="C:cytosol"/>
    <property type="evidence" value="ECO:0000304"/>
    <property type="project" value="Reactome"/>
</dbReference>
<dbReference type="GO" id="GO:0005739">
    <property type="term" value="C:mitochondrion"/>
    <property type="evidence" value="ECO:0000314"/>
    <property type="project" value="LIFEdb"/>
</dbReference>
<dbReference type="GO" id="GO:0005509">
    <property type="term" value="F:calcium ion binding"/>
    <property type="evidence" value="ECO:0000318"/>
    <property type="project" value="GO_Central"/>
</dbReference>
<dbReference type="FunFam" id="1.10.238.10:FF:000010">
    <property type="entry name" value="Myosin regulatory light chain 2, atrial isoform"/>
    <property type="match status" value="1"/>
</dbReference>
<dbReference type="FunFam" id="1.10.238.10:FF:000007">
    <property type="entry name" value="Putative myosin regulatory light chain sqh"/>
    <property type="match status" value="1"/>
</dbReference>
<dbReference type="Gene3D" id="1.10.238.10">
    <property type="entry name" value="EF-hand"/>
    <property type="match status" value="2"/>
</dbReference>
<dbReference type="InterPro" id="IPR011992">
    <property type="entry name" value="EF-hand-dom_pair"/>
</dbReference>
<dbReference type="InterPro" id="IPR018247">
    <property type="entry name" value="EF_Hand_1_Ca_BS"/>
</dbReference>
<dbReference type="InterPro" id="IPR002048">
    <property type="entry name" value="EF_hand_dom"/>
</dbReference>
<dbReference type="InterPro" id="IPR050403">
    <property type="entry name" value="Myosin_RLC"/>
</dbReference>
<dbReference type="PANTHER" id="PTHR23049">
    <property type="entry name" value="MYOSIN REGULATORY LIGHT CHAIN 2"/>
    <property type="match status" value="1"/>
</dbReference>
<dbReference type="Pfam" id="PF13405">
    <property type="entry name" value="EF-hand_6"/>
    <property type="match status" value="1"/>
</dbReference>
<dbReference type="SMART" id="SM00054">
    <property type="entry name" value="EFh"/>
    <property type="match status" value="2"/>
</dbReference>
<dbReference type="SUPFAM" id="SSF47473">
    <property type="entry name" value="EF-hand"/>
    <property type="match status" value="1"/>
</dbReference>
<dbReference type="PROSITE" id="PS00018">
    <property type="entry name" value="EF_HAND_1"/>
    <property type="match status" value="1"/>
</dbReference>
<dbReference type="PROSITE" id="PS50222">
    <property type="entry name" value="EF_HAND_2"/>
    <property type="match status" value="3"/>
</dbReference>
<reference key="1">
    <citation type="submission" date="2005-07" db="EMBL/GenBank/DDBJ databases">
        <authorList>
            <person name="Mural R.J."/>
            <person name="Istrail S."/>
            <person name="Sutton G.G."/>
            <person name="Florea L."/>
            <person name="Halpern A.L."/>
            <person name="Mobarry C.M."/>
            <person name="Lippert R."/>
            <person name="Walenz B."/>
            <person name="Shatkay H."/>
            <person name="Dew I."/>
            <person name="Miller J.R."/>
            <person name="Flanigan M.J."/>
            <person name="Edwards N.J."/>
            <person name="Bolanos R."/>
            <person name="Fasulo D."/>
            <person name="Halldorsson B.V."/>
            <person name="Hannenhalli S."/>
            <person name="Turner R."/>
            <person name="Yooseph S."/>
            <person name="Lu F."/>
            <person name="Nusskern D.R."/>
            <person name="Shue B.C."/>
            <person name="Zheng X.H."/>
            <person name="Zhong F."/>
            <person name="Delcher A.L."/>
            <person name="Huson D.H."/>
            <person name="Kravitz S.A."/>
            <person name="Mouchard L."/>
            <person name="Reinert K."/>
            <person name="Remington K.A."/>
            <person name="Clark A.G."/>
            <person name="Waterman M.S."/>
            <person name="Eichler E.E."/>
            <person name="Adams M.D."/>
            <person name="Hunkapiller M.W."/>
            <person name="Myers E.W."/>
            <person name="Venter J.C."/>
        </authorList>
    </citation>
    <scope>NUCLEOTIDE SEQUENCE [LARGE SCALE GENOMIC DNA]</scope>
</reference>
<reference key="2">
    <citation type="journal article" date="2004" name="Genome Res.">
        <title>The status, quality, and expansion of the NIH full-length cDNA project: the Mammalian Gene Collection (MGC).</title>
        <authorList>
            <consortium name="The MGC Project Team"/>
        </authorList>
    </citation>
    <scope>NUCLEOTIDE SEQUENCE [LARGE SCALE MRNA]</scope>
    <source>
        <tissue>Skin</tissue>
    </source>
</reference>
<feature type="chain" id="PRO_0000322130" description="Myosin regulatory light chain 10">
    <location>
        <begin position="1"/>
        <end position="226"/>
    </location>
</feature>
<feature type="domain" description="EF-hand 1" evidence="2">
    <location>
        <begin position="84"/>
        <end position="119"/>
    </location>
</feature>
<feature type="domain" description="EF-hand 2" evidence="2">
    <location>
        <begin position="154"/>
        <end position="189"/>
    </location>
</feature>
<feature type="domain" description="EF-hand 3" evidence="2">
    <location>
        <begin position="190"/>
        <end position="225"/>
    </location>
</feature>
<feature type="binding site" evidence="2">
    <location>
        <position position="97"/>
    </location>
    <ligand>
        <name>Ca(2+)</name>
        <dbReference type="ChEBI" id="CHEBI:29108"/>
    </ligand>
</feature>
<feature type="binding site" evidence="2">
    <location>
        <position position="99"/>
    </location>
    <ligand>
        <name>Ca(2+)</name>
        <dbReference type="ChEBI" id="CHEBI:29108"/>
    </ligand>
</feature>
<feature type="binding site" evidence="2">
    <location>
        <position position="101"/>
    </location>
    <ligand>
        <name>Ca(2+)</name>
        <dbReference type="ChEBI" id="CHEBI:29108"/>
    </ligand>
</feature>
<feature type="binding site" evidence="2">
    <location>
        <position position="108"/>
    </location>
    <ligand>
        <name>Ca(2+)</name>
        <dbReference type="ChEBI" id="CHEBI:29108"/>
    </ligand>
</feature>
<feature type="sequence variant" id="VAR_039401" description="In dbSNP:rs12216595.">
    <original>M</original>
    <variation>T</variation>
    <location>
        <position position="46"/>
    </location>
</feature>
<gene>
    <name type="primary">MYL10</name>
    <name type="synonym">MYLC2PL</name>
    <name type="synonym">PLRLC</name>
</gene>
<keyword id="KW-0106">Calcium</keyword>
<keyword id="KW-0479">Metal-binding</keyword>
<keyword id="KW-1267">Proteomics identification</keyword>
<keyword id="KW-1185">Reference proteome</keyword>
<keyword id="KW-0677">Repeat</keyword>
<protein>
    <recommendedName>
        <fullName>Myosin regulatory light chain 10</fullName>
    </recommendedName>
    <alternativeName>
        <fullName>Myosin light chain 2, lymphocyte-specific</fullName>
    </alternativeName>
    <alternativeName>
        <fullName>Precursor lymphocyte-specific regulatory light chain</fullName>
    </alternativeName>
</protein>
<comment type="subunit">
    <text>Myosin is a hexamer of 2 heavy chains and 4 light chains.</text>
</comment>
<comment type="interaction">
    <interactant intactId="EBI-17561739">
        <id>Q9BUA6</id>
    </interactant>
    <interactant intactId="EBI-7254550">
        <id>P36508</id>
        <label>ZNF76</label>
    </interactant>
    <organismsDiffer>false</organismsDiffer>
    <experiments>3</experiments>
</comment>
<comment type="miscellaneous">
    <text evidence="1">This chain binds calcium.</text>
</comment>
<sequence length="226" mass="25308">MLLRLVSNSWPQVILPPRPPKVLGLQAPRRARKRAEGTASSNVFSMFDQSQIQEFKESLALSPRLERNGMISAHCNLCLTGSSNSPASASQAFTIMDQNRDGFIDKEDLRDTFAALGRINVKNEELEAMVKEAPGPINFTVFLTMFGEKLKGTDPEETILHAFKVFDTEGKGFVKADVIKEKLMTQADRFSEEEVKQMFAAFPPDVCGNLDYRNLCYVITHGEEKD</sequence>